<evidence type="ECO:0000303" key="1">
    <source>
    </source>
</evidence>
<evidence type="ECO:0000305" key="2"/>
<comment type="subcellular location">
    <subcellularLocation>
        <location>Cytoplasm</location>
    </subcellularLocation>
</comment>
<comment type="similarity">
    <text evidence="2">Belongs to the universal ribosomal protein uS19 family.</text>
</comment>
<gene>
    <name type="primary">RPS15F</name>
    <name type="ordered locus">At5g63070</name>
    <name type="ORF">MDC12.3</name>
</gene>
<protein>
    <recommendedName>
        <fullName evidence="1">Small ribosomal subunit protein uS19v</fullName>
    </recommendedName>
    <alternativeName>
        <fullName>40S ribosomal protein S15-6</fullName>
    </alternativeName>
</protein>
<keyword id="KW-0963">Cytoplasm</keyword>
<keyword id="KW-1185">Reference proteome</keyword>
<keyword id="KW-0687">Ribonucleoprotein</keyword>
<keyword id="KW-0689">Ribosomal protein</keyword>
<accession>Q9FML6</accession>
<accession>Q4PSA0</accession>
<organism>
    <name type="scientific">Arabidopsis thaliana</name>
    <name type="common">Mouse-ear cress</name>
    <dbReference type="NCBI Taxonomy" id="3702"/>
    <lineage>
        <taxon>Eukaryota</taxon>
        <taxon>Viridiplantae</taxon>
        <taxon>Streptophyta</taxon>
        <taxon>Embryophyta</taxon>
        <taxon>Tracheophyta</taxon>
        <taxon>Spermatophyta</taxon>
        <taxon>Magnoliopsida</taxon>
        <taxon>eudicotyledons</taxon>
        <taxon>Gunneridae</taxon>
        <taxon>Pentapetalae</taxon>
        <taxon>rosids</taxon>
        <taxon>malvids</taxon>
        <taxon>Brassicales</taxon>
        <taxon>Brassicaceae</taxon>
        <taxon>Camelineae</taxon>
        <taxon>Arabidopsis</taxon>
    </lineage>
</organism>
<dbReference type="EMBL" id="AB008265">
    <property type="protein sequence ID" value="BAB10549.1"/>
    <property type="molecule type" value="Genomic_DNA"/>
</dbReference>
<dbReference type="EMBL" id="CP002688">
    <property type="protein sequence ID" value="AED97696.1"/>
    <property type="molecule type" value="Genomic_DNA"/>
</dbReference>
<dbReference type="EMBL" id="DQ056736">
    <property type="protein sequence ID" value="AAY78880.1"/>
    <property type="molecule type" value="mRNA"/>
</dbReference>
<dbReference type="RefSeq" id="NP_201112.1">
    <property type="nucleotide sequence ID" value="NM_125701.2"/>
</dbReference>
<dbReference type="SMR" id="Q9FML6"/>
<dbReference type="STRING" id="3702.Q9FML6"/>
<dbReference type="PaxDb" id="3702-AT5G63070.1"/>
<dbReference type="EnsemblPlants" id="AT5G63070.1">
    <property type="protein sequence ID" value="AT5G63070.1"/>
    <property type="gene ID" value="AT5G63070"/>
</dbReference>
<dbReference type="GeneID" id="836427"/>
<dbReference type="Gramene" id="AT5G63070.1">
    <property type="protein sequence ID" value="AT5G63070.1"/>
    <property type="gene ID" value="AT5G63070"/>
</dbReference>
<dbReference type="KEGG" id="ath:AT5G63070"/>
<dbReference type="Araport" id="AT5G63070"/>
<dbReference type="TAIR" id="AT5G63070"/>
<dbReference type="eggNOG" id="KOG0898">
    <property type="taxonomic scope" value="Eukaryota"/>
</dbReference>
<dbReference type="HOGENOM" id="CLU_097347_1_0_1"/>
<dbReference type="InParanoid" id="Q9FML6"/>
<dbReference type="OMA" id="SCFTPSR"/>
<dbReference type="OrthoDB" id="1085364at2759"/>
<dbReference type="PhylomeDB" id="Q9FML6"/>
<dbReference type="PRO" id="PR:Q9FML6"/>
<dbReference type="Proteomes" id="UP000006548">
    <property type="component" value="Chromosome 5"/>
</dbReference>
<dbReference type="ExpressionAtlas" id="Q9FML6">
    <property type="expression patterns" value="baseline and differential"/>
</dbReference>
<dbReference type="GO" id="GO:0022627">
    <property type="term" value="C:cytosolic small ribosomal subunit"/>
    <property type="evidence" value="ECO:0007005"/>
    <property type="project" value="TAIR"/>
</dbReference>
<dbReference type="GO" id="GO:0003723">
    <property type="term" value="F:RNA binding"/>
    <property type="evidence" value="ECO:0007669"/>
    <property type="project" value="InterPro"/>
</dbReference>
<dbReference type="GO" id="GO:0003735">
    <property type="term" value="F:structural constituent of ribosome"/>
    <property type="evidence" value="ECO:0000314"/>
    <property type="project" value="CAFA"/>
</dbReference>
<dbReference type="GO" id="GO:0006412">
    <property type="term" value="P:translation"/>
    <property type="evidence" value="ECO:0007669"/>
    <property type="project" value="InterPro"/>
</dbReference>
<dbReference type="FunFam" id="3.30.860.10:FF:000002">
    <property type="entry name" value="40S ribosomal protein S15"/>
    <property type="match status" value="1"/>
</dbReference>
<dbReference type="Gene3D" id="3.30.860.10">
    <property type="entry name" value="30s Ribosomal Protein S19, Chain A"/>
    <property type="match status" value="1"/>
</dbReference>
<dbReference type="HAMAP" id="MF_00531">
    <property type="entry name" value="Ribosomal_uS19"/>
    <property type="match status" value="1"/>
</dbReference>
<dbReference type="InterPro" id="IPR002222">
    <property type="entry name" value="Ribosomal_uS19"/>
</dbReference>
<dbReference type="InterPro" id="IPR020934">
    <property type="entry name" value="Ribosomal_uS19_CS"/>
</dbReference>
<dbReference type="InterPro" id="IPR005713">
    <property type="entry name" value="Ribosomal_uS19_euk/arc"/>
</dbReference>
<dbReference type="InterPro" id="IPR023575">
    <property type="entry name" value="Ribosomal_uS19_SF"/>
</dbReference>
<dbReference type="NCBIfam" id="TIGR01025">
    <property type="entry name" value="uS19_arch"/>
    <property type="match status" value="1"/>
</dbReference>
<dbReference type="PANTHER" id="PTHR11880">
    <property type="entry name" value="RIBOSOMAL PROTEIN S19P FAMILY MEMBER"/>
    <property type="match status" value="1"/>
</dbReference>
<dbReference type="PANTHER" id="PTHR11880:SF2">
    <property type="entry name" value="SMALL RIBOSOMAL SUBUNIT PROTEIN US19"/>
    <property type="match status" value="1"/>
</dbReference>
<dbReference type="Pfam" id="PF00203">
    <property type="entry name" value="Ribosomal_S19"/>
    <property type="match status" value="1"/>
</dbReference>
<dbReference type="PIRSF" id="PIRSF002144">
    <property type="entry name" value="Ribosomal_S19"/>
    <property type="match status" value="1"/>
</dbReference>
<dbReference type="PRINTS" id="PR00975">
    <property type="entry name" value="RIBOSOMALS19"/>
</dbReference>
<dbReference type="SUPFAM" id="SSF54570">
    <property type="entry name" value="Ribosomal protein S19"/>
    <property type="match status" value="1"/>
</dbReference>
<dbReference type="PROSITE" id="PS00323">
    <property type="entry name" value="RIBOSOMAL_S19"/>
    <property type="match status" value="1"/>
</dbReference>
<proteinExistence type="evidence at transcript level"/>
<feature type="chain" id="PRO_0000130044" description="Small ribosomal subunit protein uS19v">
    <location>
        <begin position="1"/>
        <end position="160"/>
    </location>
</feature>
<name>RS156_ARATH</name>
<reference key="1">
    <citation type="journal article" date="1997" name="DNA Res.">
        <title>Structural analysis of Arabidopsis thaliana chromosome 5. III. Sequence features of the regions of 1,191,918 bp covered by seventeen physically assigned P1 clones.</title>
        <authorList>
            <person name="Nakamura Y."/>
            <person name="Sato S."/>
            <person name="Kaneko T."/>
            <person name="Kotani H."/>
            <person name="Asamizu E."/>
            <person name="Miyajima N."/>
            <person name="Tabata S."/>
        </authorList>
    </citation>
    <scope>NUCLEOTIDE SEQUENCE [LARGE SCALE GENOMIC DNA]</scope>
    <source>
        <strain>cv. Columbia</strain>
    </source>
</reference>
<reference key="2">
    <citation type="journal article" date="2017" name="Plant J.">
        <title>Araport11: a complete reannotation of the Arabidopsis thaliana reference genome.</title>
        <authorList>
            <person name="Cheng C.Y."/>
            <person name="Krishnakumar V."/>
            <person name="Chan A.P."/>
            <person name="Thibaud-Nissen F."/>
            <person name="Schobel S."/>
            <person name="Town C.D."/>
        </authorList>
    </citation>
    <scope>GENOME REANNOTATION</scope>
    <source>
        <strain>cv. Columbia</strain>
    </source>
</reference>
<reference key="3">
    <citation type="submission" date="2005-05" db="EMBL/GenBank/DDBJ databases">
        <authorList>
            <person name="Underwood B.A."/>
            <person name="Xiao Y.-L."/>
            <person name="Moskal W.A. Jr."/>
            <person name="Monaghan E.L."/>
            <person name="Wang W."/>
            <person name="Redman J.C."/>
            <person name="Wu H.C."/>
            <person name="Utterback T."/>
            <person name="Town C.D."/>
        </authorList>
    </citation>
    <scope>NUCLEOTIDE SEQUENCE [LARGE SCALE MRNA]</scope>
    <source>
        <strain>cv. Columbia</strain>
    </source>
</reference>
<reference key="4">
    <citation type="journal article" date="2001" name="Plant Physiol.">
        <title>The organization of cytoplasmic ribosomal protein genes in the Arabidopsis genome.</title>
        <authorList>
            <person name="Barakat A."/>
            <person name="Szick-Miranda K."/>
            <person name="Chang I.-F."/>
            <person name="Guyot R."/>
            <person name="Blanc G."/>
            <person name="Cooke R."/>
            <person name="Delseny M."/>
            <person name="Bailey-Serres J."/>
        </authorList>
    </citation>
    <scope>GENE FAMILY ORGANIZATION</scope>
    <scope>NOMENCLATURE</scope>
</reference>
<reference key="5">
    <citation type="journal article" date="2023" name="Plant Cell">
        <title>An updated nomenclature for plant ribosomal protein genes.</title>
        <authorList>
            <person name="Scarpin M.R."/>
            <person name="Busche M."/>
            <person name="Martinez R.E."/>
            <person name="Harper L.C."/>
            <person name="Reiser L."/>
            <person name="Szakonyi D."/>
            <person name="Merchante C."/>
            <person name="Lan T."/>
            <person name="Xiong W."/>
            <person name="Mo B."/>
            <person name="Tang G."/>
            <person name="Chen X."/>
            <person name="Bailey-Serres J."/>
            <person name="Browning K.S."/>
            <person name="Brunkard J.O."/>
        </authorList>
    </citation>
    <scope>NOMENCLATURE</scope>
</reference>
<sequence>MAINEPEFATAVAVATKKRTFKKFSFRGFNVDALLKMSNVDLAKLFNARVRRRFYRGLKKQPLILIKKLRRAKKEASDENKMKPEVVKTHLRNMIIVPEMIGSVVGVHNGKKFNEIVIKPEMIGHYLAEFSMTCKKVNHHRPRICGCCCFRRSTRFIPLR</sequence>